<sequence>DPLYTKFVSLVKSDPVIHTLLPLSPKGEICDINGVCVDAAEDEFFRLTTKEGKLTVERDVVRTKTTDYSPILQFEQDPVQILDALLPLYLNSQILRALQESLASELAARMSAMSNAAA</sequence>
<name>ATPG_VIGUN</name>
<dbReference type="EMBL" id="DQ312300">
    <property type="protein sequence ID" value="ABC42340.1"/>
    <property type="molecule type" value="mRNA"/>
</dbReference>
<dbReference type="SMR" id="Q2LGZ2"/>
<dbReference type="GO" id="GO:0009535">
    <property type="term" value="C:chloroplast thylakoid membrane"/>
    <property type="evidence" value="ECO:0007669"/>
    <property type="project" value="UniProtKB-SubCell"/>
</dbReference>
<dbReference type="GO" id="GO:0045259">
    <property type="term" value="C:proton-transporting ATP synthase complex"/>
    <property type="evidence" value="ECO:0007669"/>
    <property type="project" value="UniProtKB-KW"/>
</dbReference>
<dbReference type="GO" id="GO:0046933">
    <property type="term" value="F:proton-transporting ATP synthase activity, rotational mechanism"/>
    <property type="evidence" value="ECO:0007669"/>
    <property type="project" value="InterPro"/>
</dbReference>
<dbReference type="Gene3D" id="3.40.1380.10">
    <property type="match status" value="1"/>
</dbReference>
<dbReference type="InterPro" id="IPR035968">
    <property type="entry name" value="ATP_synth_F1_ATPase_gsu"/>
</dbReference>
<dbReference type="InterPro" id="IPR000131">
    <property type="entry name" value="ATP_synth_F1_gsu"/>
</dbReference>
<dbReference type="PANTHER" id="PTHR11693">
    <property type="entry name" value="ATP SYNTHASE GAMMA CHAIN"/>
    <property type="match status" value="1"/>
</dbReference>
<dbReference type="PANTHER" id="PTHR11693:SF41">
    <property type="entry name" value="ATP SYNTHASE GAMMA CHAIN, CHLOROPLASTIC"/>
    <property type="match status" value="1"/>
</dbReference>
<dbReference type="Pfam" id="PF00231">
    <property type="entry name" value="ATP-synt"/>
    <property type="match status" value="1"/>
</dbReference>
<dbReference type="SUPFAM" id="SSF52943">
    <property type="entry name" value="ATP synthase (F1-ATPase), gamma subunit"/>
    <property type="match status" value="1"/>
</dbReference>
<evidence type="ECO:0000250" key="1"/>
<evidence type="ECO:0000269" key="2">
    <source>
    </source>
</evidence>
<evidence type="ECO:0000305" key="3"/>
<comment type="function">
    <text evidence="2">Produces ATP from ADP in the presence of a proton gradient across the membrane. The gamma chain is believed to be important in regulating ATPase activity and the flow of protons through the CF(0) complex.</text>
</comment>
<comment type="function">
    <text evidence="2">Inceptin is a proteolytic fragment produced by insect larvae that previously ingested the protein. This peptide mediate plant perception of herbivory through the induction of volatile, phenylpropanoid and protease inhibitor defenses such as ethylene, jasmonic acid and salicylic acid for example.</text>
</comment>
<comment type="subunit">
    <text evidence="1">F-type ATPases have 2 components, CF(1) - the catalytic core - and CF(0) - the membrane proton channel. CF(1) has five subunits: alpha(3), beta(3), gamma(1), delta(1), epsilon(1). CF(0) has four main subunits: a, b, b' and c (By similarity).</text>
</comment>
<comment type="subcellular location">
    <subcellularLocation>
        <location evidence="1">Plastid</location>
        <location evidence="1">Chloroplast thylakoid membrane</location>
        <topology evidence="1">Peripheral membrane protein</topology>
    </subcellularLocation>
</comment>
<comment type="similarity">
    <text evidence="3">Belongs to the ATPase gamma chain family.</text>
</comment>
<reference key="1">
    <citation type="journal article" date="2006" name="Proc. Natl. Acad. Sci. U.S.A.">
        <title>Fragments of ATP synthase mediate plant perception of insect attack.</title>
        <authorList>
            <person name="Schmelz E.A."/>
            <person name="Carroll M.J."/>
            <person name="Leclere S."/>
            <person name="Phipps S.M."/>
            <person name="Meredith J."/>
            <person name="Chourey P.S."/>
            <person name="Alborn H.T."/>
            <person name="Teal P.E."/>
        </authorList>
    </citation>
    <scope>NUCLEOTIDE SEQUENCE [MRNA]</scope>
    <scope>PROTEIN SEQUENCE OF 29-39</scope>
    <scope>FUNCTION OF INCEPTIN</scope>
    <source>
        <strain>cv. California Blackeye no.5</strain>
    </source>
</reference>
<organism>
    <name type="scientific">Vigna unguiculata</name>
    <name type="common">Cowpea</name>
    <dbReference type="NCBI Taxonomy" id="3917"/>
    <lineage>
        <taxon>Eukaryota</taxon>
        <taxon>Viridiplantae</taxon>
        <taxon>Streptophyta</taxon>
        <taxon>Embryophyta</taxon>
        <taxon>Tracheophyta</taxon>
        <taxon>Spermatophyta</taxon>
        <taxon>Magnoliopsida</taxon>
        <taxon>eudicotyledons</taxon>
        <taxon>Gunneridae</taxon>
        <taxon>Pentapetalae</taxon>
        <taxon>rosids</taxon>
        <taxon>fabids</taxon>
        <taxon>Fabales</taxon>
        <taxon>Fabaceae</taxon>
        <taxon>Papilionoideae</taxon>
        <taxon>50 kb inversion clade</taxon>
        <taxon>NPAAA clade</taxon>
        <taxon>indigoferoid/millettioid clade</taxon>
        <taxon>Phaseoleae</taxon>
        <taxon>Vigna</taxon>
    </lineage>
</organism>
<protein>
    <recommendedName>
        <fullName>ATP synthase subunit gamma, chloroplastic</fullName>
    </recommendedName>
    <alternativeName>
        <fullName>F-ATPase gamma subunit</fullName>
    </alternativeName>
    <component>
        <recommendedName>
            <fullName>Inceptin</fullName>
        </recommendedName>
    </component>
</protein>
<proteinExistence type="evidence at protein level"/>
<feature type="chain" id="PRO_0000245320" description="ATP synthase subunit gamma, chloroplastic">
    <location>
        <begin position="1" status="less than"/>
        <end position="118" status="greater than"/>
    </location>
</feature>
<feature type="peptide" id="PRO_0000245321" description="Inceptin">
    <location>
        <begin position="29"/>
        <end position="39"/>
    </location>
</feature>
<feature type="disulfide bond">
    <location>
        <begin position="30"/>
        <end position="36"/>
    </location>
</feature>
<feature type="non-terminal residue">
    <location>
        <position position="1"/>
    </location>
</feature>
<feature type="non-terminal residue">
    <location>
        <position position="118"/>
    </location>
</feature>
<accession>Q2LGZ2</accession>
<keyword id="KW-0066">ATP synthesis</keyword>
<keyword id="KW-0139">CF(1)</keyword>
<keyword id="KW-0150">Chloroplast</keyword>
<keyword id="KW-0903">Direct protein sequencing</keyword>
<keyword id="KW-1015">Disulfide bond</keyword>
<keyword id="KW-0375">Hydrogen ion transport</keyword>
<keyword id="KW-0406">Ion transport</keyword>
<keyword id="KW-0472">Membrane</keyword>
<keyword id="KW-0934">Plastid</keyword>
<keyword id="KW-0793">Thylakoid</keyword>
<keyword id="KW-0813">Transport</keyword>